<name>FYUA_YERPE</name>
<dbReference type="EMBL" id="Z35104">
    <property type="protein sequence ID" value="CAA84487.1"/>
    <property type="molecule type" value="Genomic_DNA"/>
</dbReference>
<dbReference type="EMBL" id="U09530">
    <property type="protein sequence ID" value="AAA69906.1"/>
    <property type="molecule type" value="Genomic_DNA"/>
</dbReference>
<dbReference type="EMBL" id="AF091251">
    <property type="protein sequence ID" value="AAC69592.1"/>
    <property type="molecule type" value="Genomic_DNA"/>
</dbReference>
<dbReference type="EMBL" id="AL031866">
    <property type="protein sequence ID" value="CAA21395.1"/>
    <property type="molecule type" value="Genomic_DNA"/>
</dbReference>
<dbReference type="EMBL" id="AL590842">
    <property type="protein sequence ID" value="CAL20545.1"/>
    <property type="molecule type" value="Genomic_DNA"/>
</dbReference>
<dbReference type="EMBL" id="AE009952">
    <property type="protein sequence ID" value="AAM85962.1"/>
    <property type="molecule type" value="Genomic_DNA"/>
</dbReference>
<dbReference type="EMBL" id="AE017042">
    <property type="protein sequence ID" value="AAS61879.1"/>
    <property type="molecule type" value="Genomic_DNA"/>
</dbReference>
<dbReference type="PIR" id="A56148">
    <property type="entry name" value="A56148"/>
</dbReference>
<dbReference type="PIR" id="AF0232">
    <property type="entry name" value="AF0232"/>
</dbReference>
<dbReference type="RefSeq" id="WP_002212885.1">
    <property type="nucleotide sequence ID" value="NZ_WUCM01000003.1"/>
</dbReference>
<dbReference type="RefSeq" id="YP_002346897.1">
    <property type="nucleotide sequence ID" value="NC_003143.1"/>
</dbReference>
<dbReference type="PDB" id="4EPA">
    <property type="method" value="X-ray"/>
    <property type="resolution" value="3.20 A"/>
    <property type="chains" value="A=23-673"/>
</dbReference>
<dbReference type="PDBsum" id="4EPA"/>
<dbReference type="SMR" id="P46359"/>
<dbReference type="IntAct" id="P46359">
    <property type="interactions" value="5"/>
</dbReference>
<dbReference type="STRING" id="214092.YPO1906"/>
<dbReference type="PaxDb" id="214092-YPO1906"/>
<dbReference type="EnsemblBacteria" id="AAS61879">
    <property type="protein sequence ID" value="AAS61879"/>
    <property type="gene ID" value="YP_1649"/>
</dbReference>
<dbReference type="KEGG" id="ype:YPO1906"/>
<dbReference type="KEGG" id="ypk:y2404"/>
<dbReference type="KEGG" id="ypm:YP_1649"/>
<dbReference type="PATRIC" id="fig|214092.21.peg.2277"/>
<dbReference type="eggNOG" id="COG4771">
    <property type="taxonomic scope" value="Bacteria"/>
</dbReference>
<dbReference type="HOGENOM" id="CLU_008287_15_2_6"/>
<dbReference type="OMA" id="KPEYSWN"/>
<dbReference type="OrthoDB" id="127311at2"/>
<dbReference type="EvolutionaryTrace" id="P46359"/>
<dbReference type="PHI-base" id="PHI:4955"/>
<dbReference type="Proteomes" id="UP000000815">
    <property type="component" value="Chromosome"/>
</dbReference>
<dbReference type="Proteomes" id="UP000001019">
    <property type="component" value="Chromosome"/>
</dbReference>
<dbReference type="Proteomes" id="UP000002490">
    <property type="component" value="Chromosome"/>
</dbReference>
<dbReference type="GO" id="GO:0009279">
    <property type="term" value="C:cell outer membrane"/>
    <property type="evidence" value="ECO:0000318"/>
    <property type="project" value="GO_Central"/>
</dbReference>
<dbReference type="GO" id="GO:0015344">
    <property type="term" value="F:siderophore uptake transmembrane transporter activity"/>
    <property type="evidence" value="ECO:0000318"/>
    <property type="project" value="GO_Central"/>
</dbReference>
<dbReference type="GO" id="GO:0038023">
    <property type="term" value="F:signaling receptor activity"/>
    <property type="evidence" value="ECO:0007669"/>
    <property type="project" value="InterPro"/>
</dbReference>
<dbReference type="GO" id="GO:0044718">
    <property type="term" value="P:siderophore transmembrane transport"/>
    <property type="evidence" value="ECO:0000318"/>
    <property type="project" value="GO_Central"/>
</dbReference>
<dbReference type="CDD" id="cd01347">
    <property type="entry name" value="ligand_gated_channel"/>
    <property type="match status" value="1"/>
</dbReference>
<dbReference type="Gene3D" id="2.40.170.20">
    <property type="entry name" value="TonB-dependent receptor, beta-barrel domain"/>
    <property type="match status" value="1"/>
</dbReference>
<dbReference type="InterPro" id="IPR012910">
    <property type="entry name" value="Plug_dom"/>
</dbReference>
<dbReference type="InterPro" id="IPR039426">
    <property type="entry name" value="TonB-dep_rcpt-like"/>
</dbReference>
<dbReference type="InterPro" id="IPR000531">
    <property type="entry name" value="TonB-dep_rcpt_b-brl"/>
</dbReference>
<dbReference type="InterPro" id="IPR036942">
    <property type="entry name" value="TonB_rcpt_b-brl_sf"/>
</dbReference>
<dbReference type="InterPro" id="IPR010105">
    <property type="entry name" value="TonB_sidphr_rcpt"/>
</dbReference>
<dbReference type="NCBIfam" id="TIGR01783">
    <property type="entry name" value="TonB-siderophor"/>
    <property type="match status" value="1"/>
</dbReference>
<dbReference type="PANTHER" id="PTHR32552">
    <property type="entry name" value="FERRICHROME IRON RECEPTOR-RELATED"/>
    <property type="match status" value="1"/>
</dbReference>
<dbReference type="PANTHER" id="PTHR32552:SF81">
    <property type="entry name" value="TONB-DEPENDENT OUTER MEMBRANE RECEPTOR"/>
    <property type="match status" value="1"/>
</dbReference>
<dbReference type="Pfam" id="PF07715">
    <property type="entry name" value="Plug"/>
    <property type="match status" value="1"/>
</dbReference>
<dbReference type="Pfam" id="PF00593">
    <property type="entry name" value="TonB_dep_Rec_b-barrel"/>
    <property type="match status" value="1"/>
</dbReference>
<dbReference type="SUPFAM" id="SSF56935">
    <property type="entry name" value="Porins"/>
    <property type="match status" value="1"/>
</dbReference>
<dbReference type="PROSITE" id="PS52016">
    <property type="entry name" value="TONB_DEPENDENT_REC_3"/>
    <property type="match status" value="1"/>
</dbReference>
<proteinExistence type="evidence at protein level"/>
<keyword id="KW-0002">3D-structure</keyword>
<keyword id="KW-0998">Cell outer membrane</keyword>
<keyword id="KW-0406">Ion transport</keyword>
<keyword id="KW-0408">Iron</keyword>
<keyword id="KW-0410">Iron transport</keyword>
<keyword id="KW-0472">Membrane</keyword>
<keyword id="KW-0675">Receptor</keyword>
<keyword id="KW-1185">Reference proteome</keyword>
<keyword id="KW-0732">Signal</keyword>
<keyword id="KW-0798">TonB box</keyword>
<keyword id="KW-0812">Transmembrane</keyword>
<keyword id="KW-1134">Transmembrane beta strand</keyword>
<keyword id="KW-0813">Transport</keyword>
<feature type="signal peptide" evidence="1">
    <location>
        <begin position="1"/>
        <end position="22"/>
    </location>
</feature>
<feature type="chain" id="PRO_0000034757" description="Pesticin receptor">
    <location>
        <begin position="23"/>
        <end position="673"/>
    </location>
</feature>
<feature type="domain" description="TBDR plug" evidence="2">
    <location>
        <begin position="41"/>
        <end position="155"/>
    </location>
</feature>
<feature type="domain" description="TBDR beta-barrel" evidence="2">
    <location>
        <begin position="160"/>
        <end position="672"/>
    </location>
</feature>
<feature type="short sequence motif" description="TonB box">
    <location>
        <begin position="30"/>
        <end position="37"/>
    </location>
</feature>
<feature type="short sequence motif" description="TonB C-terminal box">
    <location>
        <begin position="657"/>
        <end position="673"/>
    </location>
</feature>
<feature type="sequence conflict" description="In Ref. 1; CAA84487." evidence="3" ref="1">
    <original>G</original>
    <variation>D</variation>
    <location>
        <position position="484"/>
    </location>
</feature>
<feature type="sequence conflict" description="In Ref. 1 and 7." evidence="3" ref="1 7">
    <original>R</original>
    <variation>G</variation>
    <location>
        <position position="514"/>
    </location>
</feature>
<feature type="strand" evidence="4">
    <location>
        <begin position="37"/>
        <end position="39"/>
    </location>
</feature>
<feature type="helix" evidence="4">
    <location>
        <begin position="44"/>
        <end position="47"/>
    </location>
</feature>
<feature type="strand" evidence="4">
    <location>
        <begin position="51"/>
        <end position="55"/>
    </location>
</feature>
<feature type="helix" evidence="4">
    <location>
        <begin position="56"/>
        <end position="61"/>
    </location>
</feature>
<feature type="helix" evidence="4">
    <location>
        <begin position="67"/>
        <end position="72"/>
    </location>
</feature>
<feature type="strand" evidence="4">
    <location>
        <begin position="81"/>
        <end position="84"/>
    </location>
</feature>
<feature type="strand" evidence="4">
    <location>
        <begin position="105"/>
        <end position="110"/>
    </location>
</feature>
<feature type="helix" evidence="4">
    <location>
        <begin position="117"/>
        <end position="119"/>
    </location>
</feature>
<feature type="strand" evidence="4">
    <location>
        <begin position="126"/>
        <end position="135"/>
    </location>
</feature>
<feature type="turn" evidence="4">
    <location>
        <begin position="138"/>
        <end position="141"/>
    </location>
</feature>
<feature type="strand" evidence="4">
    <location>
        <begin position="146"/>
        <end position="154"/>
    </location>
</feature>
<feature type="strand" evidence="4">
    <location>
        <begin position="162"/>
        <end position="170"/>
    </location>
</feature>
<feature type="helix" evidence="4">
    <location>
        <begin position="171"/>
        <end position="173"/>
    </location>
</feature>
<feature type="strand" evidence="4">
    <location>
        <begin position="174"/>
        <end position="186"/>
    </location>
</feature>
<feature type="turn" evidence="4">
    <location>
        <begin position="187"/>
        <end position="189"/>
    </location>
</feature>
<feature type="strand" evidence="4">
    <location>
        <begin position="190"/>
        <end position="201"/>
    </location>
</feature>
<feature type="turn" evidence="4">
    <location>
        <begin position="208"/>
        <end position="210"/>
    </location>
</feature>
<feature type="strand" evidence="4">
    <location>
        <begin position="218"/>
        <end position="229"/>
    </location>
</feature>
<feature type="strand" evidence="4">
    <location>
        <begin position="234"/>
        <end position="249"/>
    </location>
</feature>
<feature type="strand" evidence="4">
    <location>
        <begin position="275"/>
        <end position="285"/>
    </location>
</feature>
<feature type="strand" evidence="4">
    <location>
        <begin position="288"/>
        <end position="290"/>
    </location>
</feature>
<feature type="strand" evidence="4">
    <location>
        <begin position="295"/>
        <end position="313"/>
    </location>
</feature>
<feature type="strand" evidence="4">
    <location>
        <begin position="316"/>
        <end position="319"/>
    </location>
</feature>
<feature type="strand" evidence="4">
    <location>
        <begin position="322"/>
        <end position="334"/>
    </location>
</feature>
<feature type="strand" evidence="4">
    <location>
        <begin position="341"/>
        <end position="362"/>
    </location>
</feature>
<feature type="strand" evidence="4">
    <location>
        <begin position="364"/>
        <end position="389"/>
    </location>
</feature>
<feature type="strand" evidence="4">
    <location>
        <begin position="391"/>
        <end position="415"/>
    </location>
</feature>
<feature type="strand" evidence="4">
    <location>
        <begin position="418"/>
        <end position="442"/>
    </location>
</feature>
<feature type="strand" evidence="4">
    <location>
        <begin position="445"/>
        <end position="452"/>
    </location>
</feature>
<feature type="strand" evidence="4">
    <location>
        <begin position="466"/>
        <end position="468"/>
    </location>
</feature>
<feature type="strand" evidence="4">
    <location>
        <begin position="476"/>
        <end position="488"/>
    </location>
</feature>
<feature type="strand" evidence="4">
    <location>
        <begin position="490"/>
        <end position="505"/>
    </location>
</feature>
<feature type="strand" evidence="4">
    <location>
        <begin position="523"/>
        <end position="535"/>
    </location>
</feature>
<feature type="strand" evidence="4">
    <location>
        <begin position="538"/>
        <end position="540"/>
    </location>
</feature>
<feature type="strand" evidence="4">
    <location>
        <begin position="542"/>
        <end position="554"/>
    </location>
</feature>
<feature type="strand" evidence="4">
    <location>
        <begin position="559"/>
        <end position="561"/>
    </location>
</feature>
<feature type="strand" evidence="4">
    <location>
        <begin position="571"/>
        <end position="579"/>
    </location>
</feature>
<feature type="strand" evidence="4">
    <location>
        <begin position="589"/>
        <end position="598"/>
    </location>
</feature>
<feature type="strand" evidence="4">
    <location>
        <begin position="602"/>
        <end position="604"/>
    </location>
</feature>
<feature type="strand" evidence="4">
    <location>
        <begin position="614"/>
        <end position="623"/>
    </location>
</feature>
<feature type="strand" evidence="4">
    <location>
        <begin position="626"/>
        <end position="637"/>
    </location>
</feature>
<feature type="strand" evidence="4">
    <location>
        <begin position="644"/>
        <end position="650"/>
    </location>
</feature>
<feature type="strand" evidence="4">
    <location>
        <begin position="653"/>
        <end position="658"/>
    </location>
</feature>
<feature type="strand" evidence="4">
    <location>
        <begin position="663"/>
        <end position="671"/>
    </location>
</feature>
<comment type="function">
    <text>Receptor for the bacteriocin pesticin and for the siderophore yersiniabactin.</text>
</comment>
<comment type="subcellular location">
    <subcellularLocation>
        <location evidence="2">Cell outer membrane</location>
        <topology evidence="2">Multi-pass membrane protein</topology>
    </subcellularLocation>
</comment>
<comment type="induction">
    <text>By iron starvation. Iron regulation mediated through the Fur protein.</text>
</comment>
<comment type="similarity">
    <text evidence="3">Belongs to the TonB-dependent receptor family.</text>
</comment>
<reference key="1">
    <citation type="submission" date="1994-07" db="EMBL/GenBank/DDBJ databases">
        <authorList>
            <person name="Rakin A."/>
            <person name="Heesemann J."/>
        </authorList>
    </citation>
    <scope>NUCLEOTIDE SEQUENCE [GENOMIC DNA]</scope>
    <source>
        <strain>6/69</strain>
    </source>
</reference>
<reference key="2">
    <citation type="journal article" date="1995" name="J. Bacteriol.">
        <title>Analysis of the pesticin receptor from Yersinia pestis: role in iron-deficient growth and possible regulation by its siderophore.</title>
        <authorList>
            <person name="Fetherston J.D."/>
            <person name="Lillard J.W."/>
            <person name="Perry R.D."/>
        </authorList>
    </citation>
    <scope>NUCLEOTIDE SEQUENCE [GENOMIC DNA]</scope>
    <source>
        <strain>KIM6</strain>
    </source>
</reference>
<reference key="3">
    <citation type="journal article" date="1998" name="Chem. Biol.">
        <title>Iron acquisition in plague: modular logic in enzymatic biogenesis of yersiniabactin by Yersinia pestis.</title>
        <authorList>
            <person name="Gehring A.M."/>
            <person name="DeMoll E."/>
            <person name="Fetherston J.D."/>
            <person name="Mori I."/>
            <person name="Mayhew G.F."/>
            <person name="Blattner F.R."/>
            <person name="Walsh C.T."/>
            <person name="Perry R.D."/>
        </authorList>
    </citation>
    <scope>NUCLEOTIDE SEQUENCE [GENOMIC DNA]</scope>
    <source>
        <strain>KIM6</strain>
    </source>
</reference>
<reference key="4">
    <citation type="submission" date="1998-10" db="EMBL/GenBank/DDBJ databases">
        <title>DNA sequence of the 102 kbases unstable region of Yersinia pestis.</title>
        <authorList>
            <person name="Buchrieser C."/>
            <person name="Rusniok C."/>
            <person name="Couve E."/>
            <person name="Frangeul L."/>
            <person name="Billault A."/>
            <person name="Kunst F."/>
            <person name="Carniel E."/>
            <person name="Glaser P."/>
        </authorList>
    </citation>
    <scope>NUCLEOTIDE SEQUENCE [GENOMIC DNA]</scope>
    <source>
        <strain>6/69</strain>
    </source>
</reference>
<reference key="5">
    <citation type="journal article" date="2001" name="Nature">
        <title>Genome sequence of Yersinia pestis, the causative agent of plague.</title>
        <authorList>
            <person name="Parkhill J."/>
            <person name="Wren B.W."/>
            <person name="Thomson N.R."/>
            <person name="Titball R.W."/>
            <person name="Holden M.T.G."/>
            <person name="Prentice M.B."/>
            <person name="Sebaihia M."/>
            <person name="James K.D."/>
            <person name="Churcher C.M."/>
            <person name="Mungall K.L."/>
            <person name="Baker S."/>
            <person name="Basham D."/>
            <person name="Bentley S.D."/>
            <person name="Brooks K."/>
            <person name="Cerdeno-Tarraga A.-M."/>
            <person name="Chillingworth T."/>
            <person name="Cronin A."/>
            <person name="Davies R.M."/>
            <person name="Davis P."/>
            <person name="Dougan G."/>
            <person name="Feltwell T."/>
            <person name="Hamlin N."/>
            <person name="Holroyd S."/>
            <person name="Jagels K."/>
            <person name="Karlyshev A.V."/>
            <person name="Leather S."/>
            <person name="Moule S."/>
            <person name="Oyston P.C.F."/>
            <person name="Quail M.A."/>
            <person name="Rutherford K.M."/>
            <person name="Simmonds M."/>
            <person name="Skelton J."/>
            <person name="Stevens K."/>
            <person name="Whitehead S."/>
            <person name="Barrell B.G."/>
        </authorList>
    </citation>
    <scope>NUCLEOTIDE SEQUENCE [LARGE SCALE GENOMIC DNA]</scope>
    <source>
        <strain>CO-92 / Biovar Orientalis</strain>
    </source>
</reference>
<reference key="6">
    <citation type="journal article" date="2002" name="J. Bacteriol.">
        <title>Genome sequence of Yersinia pestis KIM.</title>
        <authorList>
            <person name="Deng W."/>
            <person name="Burland V."/>
            <person name="Plunkett G. III"/>
            <person name="Boutin A."/>
            <person name="Mayhew G.F."/>
            <person name="Liss P."/>
            <person name="Perna N.T."/>
            <person name="Rose D.J."/>
            <person name="Mau B."/>
            <person name="Zhou S."/>
            <person name="Schwartz D.C."/>
            <person name="Fetherston J.D."/>
            <person name="Lindler L.E."/>
            <person name="Brubaker R.R."/>
            <person name="Plano G.V."/>
            <person name="Straley S.C."/>
            <person name="McDonough K.A."/>
            <person name="Nilles M.L."/>
            <person name="Matson J.S."/>
            <person name="Blattner F.R."/>
            <person name="Perry R.D."/>
        </authorList>
    </citation>
    <scope>NUCLEOTIDE SEQUENCE [LARGE SCALE GENOMIC DNA]</scope>
    <source>
        <strain>KIM10+ / Biovar Mediaevalis</strain>
    </source>
</reference>
<reference key="7">
    <citation type="journal article" date="2004" name="DNA Res.">
        <title>Complete genome sequence of Yersinia pestis strain 91001, an isolate avirulent to humans.</title>
        <authorList>
            <person name="Song Y."/>
            <person name="Tong Z."/>
            <person name="Wang J."/>
            <person name="Wang L."/>
            <person name="Guo Z."/>
            <person name="Han Y."/>
            <person name="Zhang J."/>
            <person name="Pei D."/>
            <person name="Zhou D."/>
            <person name="Qin H."/>
            <person name="Pang X."/>
            <person name="Han Y."/>
            <person name="Zhai J."/>
            <person name="Li M."/>
            <person name="Cui B."/>
            <person name="Qi Z."/>
            <person name="Jin L."/>
            <person name="Dai R."/>
            <person name="Chen F."/>
            <person name="Li S."/>
            <person name="Ye C."/>
            <person name="Du Z."/>
            <person name="Lin W."/>
            <person name="Wang J."/>
            <person name="Yu J."/>
            <person name="Yang H."/>
            <person name="Wang J."/>
            <person name="Huang P."/>
            <person name="Yang R."/>
        </authorList>
    </citation>
    <scope>NUCLEOTIDE SEQUENCE [LARGE SCALE GENOMIC DNA]</scope>
    <source>
        <strain>91001 / Biovar Mediaevalis</strain>
    </source>
</reference>
<evidence type="ECO:0000255" key="1"/>
<evidence type="ECO:0000255" key="2">
    <source>
        <dbReference type="PROSITE-ProRule" id="PRU01360"/>
    </source>
</evidence>
<evidence type="ECO:0000305" key="3"/>
<evidence type="ECO:0007829" key="4">
    <source>
        <dbReference type="PDB" id="4EPA"/>
    </source>
</evidence>
<accession>P46359</accession>
<accession>Q0WFP1</accession>
<organism>
    <name type="scientific">Yersinia pestis</name>
    <dbReference type="NCBI Taxonomy" id="632"/>
    <lineage>
        <taxon>Bacteria</taxon>
        <taxon>Pseudomonadati</taxon>
        <taxon>Pseudomonadota</taxon>
        <taxon>Gammaproteobacteria</taxon>
        <taxon>Enterobacterales</taxon>
        <taxon>Yersiniaceae</taxon>
        <taxon>Yersinia</taxon>
    </lineage>
</organism>
<gene>
    <name type="primary">fyuA</name>
    <name type="synonym">psn</name>
    <name type="ordered locus">YPO1906</name>
    <name type="ordered locus">y2404</name>
    <name type="ordered locus">YP_1649</name>
</gene>
<sequence>MKMTRLYPLALGGLLLPAIANAQTSQQDESTLVVTASKQSSRSASANNVSSTVVSAPELSDAGVTASDKLPRVLPGLNIENSGNMLFSTISLRGVSSAQDFYNPAVTLYVDGVPQLSTNTIQALTDVQSVELLRGPQGTLYGKSAQGGIINIVTQQPDSTPRGYIEGGVSSRDSYRSKFNLSGPIQDGLLYGSVTLLRQVDDGDMINPATGSDDLGGTRASIGNVKLRLAPDDQPWEMGFAASRECTRATQDAYVGWNDIKGRKLSISDGSPDPYMRRCTDSQTLSGKYTTDDWVFNLISAWQQQHYSRTFPSGSLIVNMPQRWNQDVQELRAATLGDARTVDMVFGLYRQNTREKLNSAYDMPTMPYLSSTGYTTAETLAAYSDLTWHLTDRFDIGGGVRFSHDKSSTQYHGSMLGNPFGDQGKSNDDQVLGQLSAGYMLTDDWRVYTRVAQGYKPSGYNIVPTAGLDAKPFVAEKSINYELGTRYETADVTLQAATFYTHTKDMQLYSGPVRMQTLSNAGKADATGVELEAKWRFAPGWSWDINGNVIRSEFTNDSELYHGNRVPFVPRYGAGSSVNGVIDTRYGALMPRLAVNLVGPHYFDGDNQLRQGTYATLDSSLGWQATERMNISVYVDNLFDRRYRTYGYMNGSSAVAQVNMGRTVGINTRIDFF</sequence>
<protein>
    <recommendedName>
        <fullName>Pesticin receptor</fullName>
    </recommendedName>
    <alternativeName>
        <fullName>IRPC</fullName>
    </alternativeName>
</protein>